<sequence length="971" mass="105225">MSTTSIQHFTSSFSPFSSGTQPVGMAQSQTVGLDTLAEGSQYALEQLQLSREANGASAVDGGVPNPLRSSISKPQGQQLYSDESSAQHTQNATTGFRNLPQRDQLAEARSTIRKSSNSGPVRRRISRACDQCNQLRTKCDGQNPCAHCIEFGLTCEYARERKKRGKASKKDLAAAAAAVANNGTAPTSNGNTSNDSVSSAKRHTPSDGQSTQEVSGRYDPNFDASRNLATAGQSQLGQHSDMSGMAGMQGSQQTPHSQPSLGGAIDAIHLNHFNTLNDSNRPQMSVPDLRSLQMLHPSGANTRSPSGALPPQGMNSGYNDGAYSLMNASEANHPSINQYRLGNSAENPPAPFLGLSPPAQSPGWLSLPSPSPANFASFSMPPFSSTLRYPVLQPVLPHIASIIPQSLACDLLDVYFTSFSPSHLSPQSPYVVGYIFRKQSFLHPTKPRVCSPGLLASMLWVAAQTSDAAFLTSPPSARGRVCQKLLELTVGLLRPLIHGPAPGETSPNYAANMVINGVALGGFGVSMDQLGAQSSATGAVDDVATYVHLATVISASEYKAASMRWWTAAWSLARELKLGRELPPNAPQPRQDGEPEDDTDVDMSKRNLPPLITSVGGNSGSTILNVTEEEREERRRLWWLLYATDRHLALCYNRPLTLLDKECEGLLQPMNDDLWQAGDFAGATYRQVGPQVECTGHSMFGFFLPLMTILGEIVDLQQAKEHPRFGRVFRNSADWDHQVLEITRQLDTYAQSLKEFEARYTSSLALGAGESEAAIEGSHLDHVSPSGRSTSTAGSRVNESIVHTKMVVAYGTHIMHVLHVLLAGKWDPINLLEDHDLWISSESFIAAMSHAVGAADAAADILEYDPDITFMPFFFGIYLLQGSFLLLLAADKLQGDVSPSVVRACETIVRAHEACVVTLNTEYQRTFRKVMRSALAQVRGRMPEDFGEQQQRRREVLALYRWTGDGSGLAL</sequence>
<gene>
    <name type="primary">xlnR</name>
    <name type="ORF">AFLA_015390</name>
</gene>
<dbReference type="EMBL" id="EQ963474">
    <property type="protein sequence ID" value="EED54287.1"/>
    <property type="molecule type" value="Genomic_DNA"/>
</dbReference>
<dbReference type="RefSeq" id="XP_002375559.1">
    <property type="nucleotide sequence ID" value="XM_002375518.1"/>
</dbReference>
<dbReference type="STRING" id="332952.B8N6M6"/>
<dbReference type="EnsemblFungi" id="EED54287">
    <property type="protein sequence ID" value="EED54287"/>
    <property type="gene ID" value="AFLA_015390"/>
</dbReference>
<dbReference type="VEuPathDB" id="FungiDB:AFLA_001983"/>
<dbReference type="eggNOG" id="ENOG502QUI0">
    <property type="taxonomic scope" value="Eukaryota"/>
</dbReference>
<dbReference type="HOGENOM" id="CLU_006123_1_0_1"/>
<dbReference type="OMA" id="NFPSFSM"/>
<dbReference type="GO" id="GO:0005634">
    <property type="term" value="C:nucleus"/>
    <property type="evidence" value="ECO:0007669"/>
    <property type="project" value="UniProtKB-SubCell"/>
</dbReference>
<dbReference type="GO" id="GO:0003677">
    <property type="term" value="F:DNA binding"/>
    <property type="evidence" value="ECO:0007669"/>
    <property type="project" value="UniProtKB-KW"/>
</dbReference>
<dbReference type="GO" id="GO:0000981">
    <property type="term" value="F:DNA-binding transcription factor activity, RNA polymerase II-specific"/>
    <property type="evidence" value="ECO:0007669"/>
    <property type="project" value="InterPro"/>
</dbReference>
<dbReference type="GO" id="GO:0008270">
    <property type="term" value="F:zinc ion binding"/>
    <property type="evidence" value="ECO:0007669"/>
    <property type="project" value="InterPro"/>
</dbReference>
<dbReference type="GO" id="GO:0006351">
    <property type="term" value="P:DNA-templated transcription"/>
    <property type="evidence" value="ECO:0007669"/>
    <property type="project" value="InterPro"/>
</dbReference>
<dbReference type="GO" id="GO:0045893">
    <property type="term" value="P:positive regulation of DNA-templated transcription"/>
    <property type="evidence" value="ECO:0000250"/>
    <property type="project" value="UniProtKB"/>
</dbReference>
<dbReference type="GO" id="GO:0045493">
    <property type="term" value="P:xylan catabolic process"/>
    <property type="evidence" value="ECO:0000250"/>
    <property type="project" value="UniProtKB"/>
</dbReference>
<dbReference type="CDD" id="cd12148">
    <property type="entry name" value="fungal_TF_MHR"/>
    <property type="match status" value="1"/>
</dbReference>
<dbReference type="CDD" id="cd00067">
    <property type="entry name" value="GAL4"/>
    <property type="match status" value="1"/>
</dbReference>
<dbReference type="FunFam" id="4.10.240.10:FF:000004">
    <property type="entry name" value="Xylanolytic transcriptional activator XlnR"/>
    <property type="match status" value="1"/>
</dbReference>
<dbReference type="Gene3D" id="4.10.240.10">
    <property type="entry name" value="Zn(2)-C6 fungal-type DNA-binding domain"/>
    <property type="match status" value="1"/>
</dbReference>
<dbReference type="InterPro" id="IPR007219">
    <property type="entry name" value="Transcription_factor_dom_fun"/>
</dbReference>
<dbReference type="InterPro" id="IPR051439">
    <property type="entry name" value="XlnR/Xlr1"/>
</dbReference>
<dbReference type="InterPro" id="IPR036864">
    <property type="entry name" value="Zn2-C6_fun-type_DNA-bd_sf"/>
</dbReference>
<dbReference type="InterPro" id="IPR001138">
    <property type="entry name" value="Zn2Cys6_DnaBD"/>
</dbReference>
<dbReference type="PANTHER" id="PTHR47663">
    <property type="entry name" value="XYLANOLYTIC TRANSCRIPTIONAL ACTIVATOR XLNR-RELATED"/>
    <property type="match status" value="1"/>
</dbReference>
<dbReference type="PANTHER" id="PTHR47663:SF1">
    <property type="entry name" value="XYLANOLYTIC TRANSCRIPTIONAL ACTIVATOR XLNR-RELATED"/>
    <property type="match status" value="1"/>
</dbReference>
<dbReference type="Pfam" id="PF04082">
    <property type="entry name" value="Fungal_trans"/>
    <property type="match status" value="1"/>
</dbReference>
<dbReference type="Pfam" id="PF00172">
    <property type="entry name" value="Zn_clus"/>
    <property type="match status" value="1"/>
</dbReference>
<dbReference type="SMART" id="SM00906">
    <property type="entry name" value="Fungal_trans"/>
    <property type="match status" value="1"/>
</dbReference>
<dbReference type="SMART" id="SM00066">
    <property type="entry name" value="GAL4"/>
    <property type="match status" value="1"/>
</dbReference>
<dbReference type="SUPFAM" id="SSF57701">
    <property type="entry name" value="Zn2/Cys6 DNA-binding domain"/>
    <property type="match status" value="1"/>
</dbReference>
<dbReference type="PROSITE" id="PS50048">
    <property type="entry name" value="ZN2_CY6_FUNGAL_2"/>
    <property type="match status" value="1"/>
</dbReference>
<protein>
    <recommendedName>
        <fullName>Xylanolytic transcriptional activator xlnR</fullName>
    </recommendedName>
    <alternativeName>
        <fullName>Xylanase regulator</fullName>
    </alternativeName>
</protein>
<keyword id="KW-0010">Activator</keyword>
<keyword id="KW-0238">DNA-binding</keyword>
<keyword id="KW-0479">Metal-binding</keyword>
<keyword id="KW-0539">Nucleus</keyword>
<keyword id="KW-0804">Transcription</keyword>
<keyword id="KW-0805">Transcription regulation</keyword>
<keyword id="KW-0862">Zinc</keyword>
<comment type="function">
    <text evidence="1">Transcriptional activator of the xylanolytic system. Involved in the regulation of extracellular cellulolytic and xylanolytic genes and in the regulation of the intracellular activities of D-xylose catabolic genes in the pentose catabolic pathway (PCP) in response to the presence of D-xylose (By similarity).</text>
</comment>
<comment type="subcellular location">
    <subcellularLocation>
        <location evidence="2">Nucleus</location>
    </subcellularLocation>
</comment>
<comment type="similarity">
    <text evidence="4">Belongs to the xlnR/xlr1 family.</text>
</comment>
<evidence type="ECO:0000250" key="1"/>
<evidence type="ECO:0000255" key="2">
    <source>
        <dbReference type="PROSITE-ProRule" id="PRU00227"/>
    </source>
</evidence>
<evidence type="ECO:0000256" key="3">
    <source>
        <dbReference type="SAM" id="MobiDB-lite"/>
    </source>
</evidence>
<evidence type="ECO:0000305" key="4"/>
<reference key="1">
    <citation type="journal article" date="2015" name="Genome Announc.">
        <title>Genome sequence of Aspergillus flavus NRRL 3357, a strain that causes aflatoxin contamination of food and feed.</title>
        <authorList>
            <person name="Nierman W.C."/>
            <person name="Yu J."/>
            <person name="Fedorova-Abrams N.D."/>
            <person name="Losada L."/>
            <person name="Cleveland T.E."/>
            <person name="Bhatnagar D."/>
            <person name="Bennett J.W."/>
            <person name="Dean R."/>
            <person name="Payne G.A."/>
        </authorList>
    </citation>
    <scope>NUCLEOTIDE SEQUENCE [LARGE SCALE GENOMIC DNA]</scope>
    <source>
        <strain>ATCC 200026 / FGSC A1120 / IAM 13836 / NRRL 3357 / JCM 12722 / SRRC 167</strain>
    </source>
</reference>
<accession>B8N6M6</accession>
<proteinExistence type="inferred from homology"/>
<name>XLNR_ASPFN</name>
<organism>
    <name type="scientific">Aspergillus flavus (strain ATCC 200026 / FGSC A1120 / IAM 13836 / NRRL 3357 / JCM 12722 / SRRC 167)</name>
    <dbReference type="NCBI Taxonomy" id="332952"/>
    <lineage>
        <taxon>Eukaryota</taxon>
        <taxon>Fungi</taxon>
        <taxon>Dikarya</taxon>
        <taxon>Ascomycota</taxon>
        <taxon>Pezizomycotina</taxon>
        <taxon>Eurotiomycetes</taxon>
        <taxon>Eurotiomycetidae</taxon>
        <taxon>Eurotiales</taxon>
        <taxon>Aspergillaceae</taxon>
        <taxon>Aspergillus</taxon>
        <taxon>Aspergillus subgen. Circumdati</taxon>
    </lineage>
</organism>
<feature type="chain" id="PRO_0000393150" description="Xylanolytic transcriptional activator xlnR">
    <location>
        <begin position="1"/>
        <end position="971"/>
    </location>
</feature>
<feature type="DNA-binding region" description="Zn(2)-C6 fungal-type" evidence="2">
    <location>
        <begin position="129"/>
        <end position="155"/>
    </location>
</feature>
<feature type="region of interest" description="Disordered" evidence="3">
    <location>
        <begin position="1"/>
        <end position="25"/>
    </location>
</feature>
<feature type="region of interest" description="Disordered" evidence="3">
    <location>
        <begin position="55"/>
        <end position="123"/>
    </location>
</feature>
<feature type="region of interest" description="Disordered" evidence="3">
    <location>
        <begin position="182"/>
        <end position="263"/>
    </location>
</feature>
<feature type="region of interest" description="Disordered" evidence="3">
    <location>
        <begin position="295"/>
        <end position="316"/>
    </location>
</feature>
<feature type="region of interest" description="Disordered" evidence="3">
    <location>
        <begin position="580"/>
        <end position="610"/>
    </location>
</feature>
<feature type="compositionally biased region" description="Low complexity" evidence="3">
    <location>
        <begin position="9"/>
        <end position="18"/>
    </location>
</feature>
<feature type="compositionally biased region" description="Polar residues" evidence="3">
    <location>
        <begin position="67"/>
        <end position="96"/>
    </location>
</feature>
<feature type="compositionally biased region" description="Polar residues" evidence="3">
    <location>
        <begin position="182"/>
        <end position="199"/>
    </location>
</feature>
<feature type="compositionally biased region" description="Polar residues" evidence="3">
    <location>
        <begin position="227"/>
        <end position="241"/>
    </location>
</feature>
<feature type="compositionally biased region" description="Polar residues" evidence="3">
    <location>
        <begin position="249"/>
        <end position="260"/>
    </location>
</feature>